<feature type="chain" id="PRO_0000350026" description="Probable dual-specificity RNA methyltransferase RlmN">
    <location>
        <begin position="1"/>
        <end position="363"/>
    </location>
</feature>
<feature type="domain" description="Radical SAM core" evidence="2">
    <location>
        <begin position="112"/>
        <end position="345"/>
    </location>
</feature>
<feature type="active site" description="Proton acceptor" evidence="1">
    <location>
        <position position="106"/>
    </location>
</feature>
<feature type="active site" description="S-methylcysteine intermediate" evidence="1">
    <location>
        <position position="350"/>
    </location>
</feature>
<feature type="binding site" evidence="1">
    <location>
        <position position="126"/>
    </location>
    <ligand>
        <name>[4Fe-4S] cluster</name>
        <dbReference type="ChEBI" id="CHEBI:49883"/>
        <note>4Fe-4S-S-AdoMet</note>
    </ligand>
</feature>
<feature type="binding site" evidence="1">
    <location>
        <position position="130"/>
    </location>
    <ligand>
        <name>[4Fe-4S] cluster</name>
        <dbReference type="ChEBI" id="CHEBI:49883"/>
        <note>4Fe-4S-S-AdoMet</note>
    </ligand>
</feature>
<feature type="binding site" evidence="1">
    <location>
        <position position="133"/>
    </location>
    <ligand>
        <name>[4Fe-4S] cluster</name>
        <dbReference type="ChEBI" id="CHEBI:49883"/>
        <note>4Fe-4S-S-AdoMet</note>
    </ligand>
</feature>
<feature type="binding site" evidence="1">
    <location>
        <begin position="176"/>
        <end position="177"/>
    </location>
    <ligand>
        <name>S-adenosyl-L-methionine</name>
        <dbReference type="ChEBI" id="CHEBI:59789"/>
    </ligand>
</feature>
<feature type="binding site" evidence="1">
    <location>
        <position position="208"/>
    </location>
    <ligand>
        <name>S-adenosyl-L-methionine</name>
        <dbReference type="ChEBI" id="CHEBI:59789"/>
    </ligand>
</feature>
<feature type="binding site" evidence="1">
    <location>
        <begin position="231"/>
        <end position="233"/>
    </location>
    <ligand>
        <name>S-adenosyl-L-methionine</name>
        <dbReference type="ChEBI" id="CHEBI:59789"/>
    </ligand>
</feature>
<feature type="binding site" evidence="1">
    <location>
        <position position="307"/>
    </location>
    <ligand>
        <name>S-adenosyl-L-methionine</name>
        <dbReference type="ChEBI" id="CHEBI:59789"/>
    </ligand>
</feature>
<feature type="disulfide bond" description="(transient)" evidence="1">
    <location>
        <begin position="119"/>
        <end position="350"/>
    </location>
</feature>
<protein>
    <recommendedName>
        <fullName evidence="1">Probable dual-specificity RNA methyltransferase RlmN</fullName>
        <ecNumber evidence="1">2.1.1.192</ecNumber>
    </recommendedName>
    <alternativeName>
        <fullName evidence="1">23S rRNA (adenine(2503)-C(2))-methyltransferase</fullName>
    </alternativeName>
    <alternativeName>
        <fullName evidence="1">23S rRNA m2A2503 methyltransferase</fullName>
    </alternativeName>
    <alternativeName>
        <fullName evidence="1">Ribosomal RNA large subunit methyltransferase N</fullName>
    </alternativeName>
    <alternativeName>
        <fullName evidence="1">tRNA (adenine(37)-C(2))-methyltransferase</fullName>
    </alternativeName>
    <alternativeName>
        <fullName evidence="1">tRNA m2A37 methyltransferase</fullName>
    </alternativeName>
</protein>
<dbReference type="EC" id="2.1.1.192" evidence="1"/>
<dbReference type="EMBL" id="CP000560">
    <property type="protein sequence ID" value="ABS73921.1"/>
    <property type="molecule type" value="Genomic_DNA"/>
</dbReference>
<dbReference type="RefSeq" id="WP_003154339.1">
    <property type="nucleotide sequence ID" value="NC_009725.2"/>
</dbReference>
<dbReference type="SMR" id="A7Z4J5"/>
<dbReference type="GeneID" id="93080691"/>
<dbReference type="KEGG" id="bay:RBAM_015580"/>
<dbReference type="HOGENOM" id="CLU_029101_0_1_9"/>
<dbReference type="Proteomes" id="UP000001120">
    <property type="component" value="Chromosome"/>
</dbReference>
<dbReference type="GO" id="GO:0005737">
    <property type="term" value="C:cytoplasm"/>
    <property type="evidence" value="ECO:0007669"/>
    <property type="project" value="UniProtKB-SubCell"/>
</dbReference>
<dbReference type="GO" id="GO:0051539">
    <property type="term" value="F:4 iron, 4 sulfur cluster binding"/>
    <property type="evidence" value="ECO:0007669"/>
    <property type="project" value="UniProtKB-UniRule"/>
</dbReference>
<dbReference type="GO" id="GO:0046872">
    <property type="term" value="F:metal ion binding"/>
    <property type="evidence" value="ECO:0007669"/>
    <property type="project" value="UniProtKB-KW"/>
</dbReference>
<dbReference type="GO" id="GO:0070040">
    <property type="term" value="F:rRNA (adenine(2503)-C2-)-methyltransferase activity"/>
    <property type="evidence" value="ECO:0007669"/>
    <property type="project" value="UniProtKB-UniRule"/>
</dbReference>
<dbReference type="GO" id="GO:0019843">
    <property type="term" value="F:rRNA binding"/>
    <property type="evidence" value="ECO:0007669"/>
    <property type="project" value="UniProtKB-UniRule"/>
</dbReference>
<dbReference type="GO" id="GO:0002935">
    <property type="term" value="F:tRNA (adenine(37)-C2)-methyltransferase activity"/>
    <property type="evidence" value="ECO:0007669"/>
    <property type="project" value="UniProtKB-UniRule"/>
</dbReference>
<dbReference type="GO" id="GO:0000049">
    <property type="term" value="F:tRNA binding"/>
    <property type="evidence" value="ECO:0007669"/>
    <property type="project" value="UniProtKB-UniRule"/>
</dbReference>
<dbReference type="GO" id="GO:0070475">
    <property type="term" value="P:rRNA base methylation"/>
    <property type="evidence" value="ECO:0007669"/>
    <property type="project" value="UniProtKB-UniRule"/>
</dbReference>
<dbReference type="GO" id="GO:0030488">
    <property type="term" value="P:tRNA methylation"/>
    <property type="evidence" value="ECO:0007669"/>
    <property type="project" value="UniProtKB-UniRule"/>
</dbReference>
<dbReference type="CDD" id="cd01335">
    <property type="entry name" value="Radical_SAM"/>
    <property type="match status" value="1"/>
</dbReference>
<dbReference type="FunFam" id="3.20.20.70:FF:000014">
    <property type="entry name" value="Probable dual-specificity RNA methyltransferase RlmN"/>
    <property type="match status" value="1"/>
</dbReference>
<dbReference type="Gene3D" id="1.10.150.530">
    <property type="match status" value="1"/>
</dbReference>
<dbReference type="Gene3D" id="3.20.20.70">
    <property type="entry name" value="Aldolase class I"/>
    <property type="match status" value="1"/>
</dbReference>
<dbReference type="HAMAP" id="MF_01849">
    <property type="entry name" value="RNA_methyltr_RlmN"/>
    <property type="match status" value="1"/>
</dbReference>
<dbReference type="InterPro" id="IPR013785">
    <property type="entry name" value="Aldolase_TIM"/>
</dbReference>
<dbReference type="InterPro" id="IPR040072">
    <property type="entry name" value="Methyltransferase_A"/>
</dbReference>
<dbReference type="InterPro" id="IPR048641">
    <property type="entry name" value="RlmN_N"/>
</dbReference>
<dbReference type="InterPro" id="IPR027492">
    <property type="entry name" value="RNA_MTrfase_RlmN"/>
</dbReference>
<dbReference type="InterPro" id="IPR004383">
    <property type="entry name" value="rRNA_lsu_MTrfase_RlmN/Cfr"/>
</dbReference>
<dbReference type="InterPro" id="IPR007197">
    <property type="entry name" value="rSAM"/>
</dbReference>
<dbReference type="NCBIfam" id="TIGR00048">
    <property type="entry name" value="rRNA_mod_RlmN"/>
    <property type="match status" value="1"/>
</dbReference>
<dbReference type="PANTHER" id="PTHR30544">
    <property type="entry name" value="23S RRNA METHYLTRANSFERASE"/>
    <property type="match status" value="1"/>
</dbReference>
<dbReference type="PANTHER" id="PTHR30544:SF5">
    <property type="entry name" value="RADICAL SAM CORE DOMAIN-CONTAINING PROTEIN"/>
    <property type="match status" value="1"/>
</dbReference>
<dbReference type="Pfam" id="PF04055">
    <property type="entry name" value="Radical_SAM"/>
    <property type="match status" value="1"/>
</dbReference>
<dbReference type="Pfam" id="PF21016">
    <property type="entry name" value="RlmN_N"/>
    <property type="match status" value="1"/>
</dbReference>
<dbReference type="PIRSF" id="PIRSF006004">
    <property type="entry name" value="CHP00048"/>
    <property type="match status" value="1"/>
</dbReference>
<dbReference type="SFLD" id="SFLDF00275">
    <property type="entry name" value="adenosine_C2_methyltransferase"/>
    <property type="match status" value="1"/>
</dbReference>
<dbReference type="SFLD" id="SFLDS00029">
    <property type="entry name" value="Radical_SAM"/>
    <property type="match status" value="1"/>
</dbReference>
<dbReference type="SUPFAM" id="SSF102114">
    <property type="entry name" value="Radical SAM enzymes"/>
    <property type="match status" value="1"/>
</dbReference>
<dbReference type="PROSITE" id="PS51918">
    <property type="entry name" value="RADICAL_SAM"/>
    <property type="match status" value="1"/>
</dbReference>
<organism>
    <name type="scientific">Bacillus velezensis (strain DSM 23117 / BGSC 10A6 / LMG 26770 / FZB42)</name>
    <name type="common">Bacillus amyloliquefaciens subsp. plantarum</name>
    <dbReference type="NCBI Taxonomy" id="326423"/>
    <lineage>
        <taxon>Bacteria</taxon>
        <taxon>Bacillati</taxon>
        <taxon>Bacillota</taxon>
        <taxon>Bacilli</taxon>
        <taxon>Bacillales</taxon>
        <taxon>Bacillaceae</taxon>
        <taxon>Bacillus</taxon>
        <taxon>Bacillus amyloliquefaciens group</taxon>
    </lineage>
</organism>
<sequence>MTQLKKTSVRKELRTEQPSIYSFELDEIKQWLTENGEKPFRAAQIFEWLYEKRVSSFDEMTNLSKSLREKLESNFVLTTLKTAVKQTSQDGTMKFLFELHDGYTIETVLMRHEYGNSVCVTTQVGCRIGCTFCASTLGGLKRNLEAGEIVAQVVKVQKALDETDERVSSVVIMGIGEPFDNFNEMLAFLKIINHDKGLNIGARHITVSTSGIIPKIYDFADQKMQINFAISLHAPNTEIRSRLMPINKAYKLPDLMEAVKYYIEKTGRRISFEYGLFGGVNDQVEHAEELAELLKDVKCHVNLIPVNYVPERDYVRTPRDQIFAFEKTLKSRGVNVTIRREQGHDIDAACGQLRAKERQDETR</sequence>
<comment type="function">
    <text evidence="1">Specifically methylates position 2 of adenine 2503 in 23S rRNA and position 2 of adenine 37 in tRNAs.</text>
</comment>
<comment type="catalytic activity">
    <reaction evidence="1">
        <text>adenosine(2503) in 23S rRNA + 2 reduced [2Fe-2S]-[ferredoxin] + 2 S-adenosyl-L-methionine = 2-methyladenosine(2503) in 23S rRNA + 5'-deoxyadenosine + L-methionine + 2 oxidized [2Fe-2S]-[ferredoxin] + S-adenosyl-L-homocysteine</text>
        <dbReference type="Rhea" id="RHEA:42916"/>
        <dbReference type="Rhea" id="RHEA-COMP:10000"/>
        <dbReference type="Rhea" id="RHEA-COMP:10001"/>
        <dbReference type="Rhea" id="RHEA-COMP:10152"/>
        <dbReference type="Rhea" id="RHEA-COMP:10282"/>
        <dbReference type="ChEBI" id="CHEBI:17319"/>
        <dbReference type="ChEBI" id="CHEBI:33737"/>
        <dbReference type="ChEBI" id="CHEBI:33738"/>
        <dbReference type="ChEBI" id="CHEBI:57844"/>
        <dbReference type="ChEBI" id="CHEBI:57856"/>
        <dbReference type="ChEBI" id="CHEBI:59789"/>
        <dbReference type="ChEBI" id="CHEBI:74411"/>
        <dbReference type="ChEBI" id="CHEBI:74497"/>
        <dbReference type="EC" id="2.1.1.192"/>
    </reaction>
</comment>
<comment type="catalytic activity">
    <reaction evidence="1">
        <text>adenosine(37) in tRNA + 2 reduced [2Fe-2S]-[ferredoxin] + 2 S-adenosyl-L-methionine = 2-methyladenosine(37) in tRNA + 5'-deoxyadenosine + L-methionine + 2 oxidized [2Fe-2S]-[ferredoxin] + S-adenosyl-L-homocysteine</text>
        <dbReference type="Rhea" id="RHEA:43332"/>
        <dbReference type="Rhea" id="RHEA-COMP:10000"/>
        <dbReference type="Rhea" id="RHEA-COMP:10001"/>
        <dbReference type="Rhea" id="RHEA-COMP:10162"/>
        <dbReference type="Rhea" id="RHEA-COMP:10485"/>
        <dbReference type="ChEBI" id="CHEBI:17319"/>
        <dbReference type="ChEBI" id="CHEBI:33737"/>
        <dbReference type="ChEBI" id="CHEBI:33738"/>
        <dbReference type="ChEBI" id="CHEBI:57844"/>
        <dbReference type="ChEBI" id="CHEBI:57856"/>
        <dbReference type="ChEBI" id="CHEBI:59789"/>
        <dbReference type="ChEBI" id="CHEBI:74411"/>
        <dbReference type="ChEBI" id="CHEBI:74497"/>
        <dbReference type="EC" id="2.1.1.192"/>
    </reaction>
</comment>
<comment type="cofactor">
    <cofactor evidence="1">
        <name>[4Fe-4S] cluster</name>
        <dbReference type="ChEBI" id="CHEBI:49883"/>
    </cofactor>
    <text evidence="1">Binds 1 [4Fe-4S] cluster. The cluster is coordinated with 3 cysteines and an exchangeable S-adenosyl-L-methionine.</text>
</comment>
<comment type="subcellular location">
    <subcellularLocation>
        <location evidence="1">Cytoplasm</location>
    </subcellularLocation>
</comment>
<comment type="miscellaneous">
    <text evidence="1">Reaction proceeds by a ping-pong mechanism involving intermediate methylation of a conserved cysteine residue.</text>
</comment>
<comment type="similarity">
    <text evidence="1">Belongs to the radical SAM superfamily. RlmN family.</text>
</comment>
<name>RLMN_BACVZ</name>
<evidence type="ECO:0000255" key="1">
    <source>
        <dbReference type="HAMAP-Rule" id="MF_01849"/>
    </source>
</evidence>
<evidence type="ECO:0000255" key="2">
    <source>
        <dbReference type="PROSITE-ProRule" id="PRU01266"/>
    </source>
</evidence>
<accession>A7Z4J5</accession>
<proteinExistence type="inferred from homology"/>
<gene>
    <name evidence="1" type="primary">rlmN</name>
    <name type="ordered locus">RBAM_015580</name>
</gene>
<keyword id="KW-0004">4Fe-4S</keyword>
<keyword id="KW-0963">Cytoplasm</keyword>
<keyword id="KW-1015">Disulfide bond</keyword>
<keyword id="KW-0408">Iron</keyword>
<keyword id="KW-0411">Iron-sulfur</keyword>
<keyword id="KW-0479">Metal-binding</keyword>
<keyword id="KW-0489">Methyltransferase</keyword>
<keyword id="KW-0698">rRNA processing</keyword>
<keyword id="KW-0949">S-adenosyl-L-methionine</keyword>
<keyword id="KW-0808">Transferase</keyword>
<keyword id="KW-0819">tRNA processing</keyword>
<reference key="1">
    <citation type="journal article" date="2007" name="Nat. Biotechnol.">
        <title>Comparative analysis of the complete genome sequence of the plant growth-promoting bacterium Bacillus amyloliquefaciens FZB42.</title>
        <authorList>
            <person name="Chen X.H."/>
            <person name="Koumoutsi A."/>
            <person name="Scholz R."/>
            <person name="Eisenreich A."/>
            <person name="Schneider K."/>
            <person name="Heinemeyer I."/>
            <person name="Morgenstern B."/>
            <person name="Voss B."/>
            <person name="Hess W.R."/>
            <person name="Reva O."/>
            <person name="Junge H."/>
            <person name="Voigt B."/>
            <person name="Jungblut P.R."/>
            <person name="Vater J."/>
            <person name="Suessmuth R."/>
            <person name="Liesegang H."/>
            <person name="Strittmatter A."/>
            <person name="Gottschalk G."/>
            <person name="Borriss R."/>
        </authorList>
    </citation>
    <scope>NUCLEOTIDE SEQUENCE [LARGE SCALE GENOMIC DNA]</scope>
    <source>
        <strain>DSM 23117 / BGSC 10A6 / LMG 26770 / FZB42</strain>
    </source>
</reference>